<gene>
    <name type="primary">Slc35e1</name>
</gene>
<dbReference type="EMBL" id="AC172623">
    <property type="status" value="NOT_ANNOTATED_CDS"/>
    <property type="molecule type" value="Genomic_DNA"/>
</dbReference>
<dbReference type="EMBL" id="AK031600">
    <property type="protein sequence ID" value="BAC27470.1"/>
    <property type="status" value="ALT_INIT"/>
    <property type="molecule type" value="mRNA"/>
</dbReference>
<dbReference type="CCDS" id="CCDS22415.2"/>
<dbReference type="RefSeq" id="NP_808434.2">
    <property type="nucleotide sequence ID" value="NM_177766.3"/>
</dbReference>
<dbReference type="SMR" id="Q8CD26"/>
<dbReference type="BioGRID" id="234754">
    <property type="interactions" value="2"/>
</dbReference>
<dbReference type="FunCoup" id="Q8CD26">
    <property type="interactions" value="1976"/>
</dbReference>
<dbReference type="STRING" id="10090.ENSMUSP00000115754"/>
<dbReference type="iPTMnet" id="Q8CD26"/>
<dbReference type="PhosphoSitePlus" id="Q8CD26"/>
<dbReference type="PaxDb" id="10090-ENSMUSP00000115754"/>
<dbReference type="PeptideAtlas" id="Q8CD26"/>
<dbReference type="ProteomicsDB" id="256557"/>
<dbReference type="Pumba" id="Q8CD26"/>
<dbReference type="TopDownProteomics" id="Q8CD26"/>
<dbReference type="Antibodypedia" id="3098">
    <property type="antibodies" value="37 antibodies from 11 providers"/>
</dbReference>
<dbReference type="DNASU" id="270066"/>
<dbReference type="Ensembl" id="ENSMUST00000152080.8">
    <property type="protein sequence ID" value="ENSMUSP00000115754.2"/>
    <property type="gene ID" value="ENSMUSG00000019731.14"/>
</dbReference>
<dbReference type="GeneID" id="270066"/>
<dbReference type="KEGG" id="mmu:270066"/>
<dbReference type="UCSC" id="uc009mgd.2">
    <property type="organism name" value="mouse"/>
</dbReference>
<dbReference type="AGR" id="MGI:2142403"/>
<dbReference type="CTD" id="79939"/>
<dbReference type="MGI" id="MGI:2142403">
    <property type="gene designation" value="Slc35e1"/>
</dbReference>
<dbReference type="VEuPathDB" id="HostDB:ENSMUSG00000019731"/>
<dbReference type="eggNOG" id="KOG1441">
    <property type="taxonomic scope" value="Eukaryota"/>
</dbReference>
<dbReference type="GeneTree" id="ENSGT00940000159007"/>
<dbReference type="HOGENOM" id="CLU_019048_1_0_1"/>
<dbReference type="InParanoid" id="Q8CD26"/>
<dbReference type="OMA" id="FWYTVSS"/>
<dbReference type="OrthoDB" id="63588at9989"/>
<dbReference type="PhylomeDB" id="Q8CD26"/>
<dbReference type="TreeFam" id="TF324822"/>
<dbReference type="BioGRID-ORCS" id="270066">
    <property type="hits" value="3 hits in 77 CRISPR screens"/>
</dbReference>
<dbReference type="ChiTaRS" id="Slc35e1">
    <property type="organism name" value="mouse"/>
</dbReference>
<dbReference type="PRO" id="PR:Q8CD26"/>
<dbReference type="Proteomes" id="UP000000589">
    <property type="component" value="Chromosome 8"/>
</dbReference>
<dbReference type="RNAct" id="Q8CD26">
    <property type="molecule type" value="protein"/>
</dbReference>
<dbReference type="Bgee" id="ENSMUSG00000019731">
    <property type="expression patterns" value="Expressed in granulocyte and 276 other cell types or tissues"/>
</dbReference>
<dbReference type="GO" id="GO:0005794">
    <property type="term" value="C:Golgi apparatus"/>
    <property type="evidence" value="ECO:0007669"/>
    <property type="project" value="Ensembl"/>
</dbReference>
<dbReference type="GO" id="GO:0016020">
    <property type="term" value="C:membrane"/>
    <property type="evidence" value="ECO:0007669"/>
    <property type="project" value="UniProtKB-SubCell"/>
</dbReference>
<dbReference type="InterPro" id="IPR004853">
    <property type="entry name" value="Sugar_P_trans_dom"/>
</dbReference>
<dbReference type="InterPro" id="IPR050186">
    <property type="entry name" value="TPT_transporter"/>
</dbReference>
<dbReference type="PANTHER" id="PTHR11132">
    <property type="entry name" value="SOLUTE CARRIER FAMILY 35"/>
    <property type="match status" value="1"/>
</dbReference>
<dbReference type="Pfam" id="PF03151">
    <property type="entry name" value="TPT"/>
    <property type="match status" value="1"/>
</dbReference>
<dbReference type="SUPFAM" id="SSF103481">
    <property type="entry name" value="Multidrug resistance efflux transporter EmrE"/>
    <property type="match status" value="1"/>
</dbReference>
<sequence>MAAAATAGPGAGAGVPGAGGGGGAREGARVAVLCLLWYALSAGGNVVNKVILSAFPFPVTVSLCHILALCAGLPPLLRAWRVPPAPPVSGPGPGPHPASGPLLPPRFYPRYVLPLAFGKYFASVSAHVSIWKVPVSYAHTVKATMPIWVVLLSRIIMKEKQSTKVYLSLVPIISGVLLATVTELSFDVWGLVSALAATLCFSLQNIFSKKVLRDSRIHHLRLLNILGCHAVFFMIPTWVLVDLSTFLVSSDLAYVSQWPWTLLLLAVSGFCNFAQNVIAFSILNLISPLSYSVANATKRIMVITVSLIMLRNPVTSTNVLGMMTAILGVFLYNKTKYDANQQARRHLLPISTSDLSSREHLRSPVEKPHNGALFPQQGDFQYRNILLTDHFQYSRQGHPNSYALSRHDV</sequence>
<name>S35E1_MOUSE</name>
<reference key="1">
    <citation type="journal article" date="2009" name="PLoS Biol.">
        <title>Lineage-specific biology revealed by a finished genome assembly of the mouse.</title>
        <authorList>
            <person name="Church D.M."/>
            <person name="Goodstadt L."/>
            <person name="Hillier L.W."/>
            <person name="Zody M.C."/>
            <person name="Goldstein S."/>
            <person name="She X."/>
            <person name="Bult C.J."/>
            <person name="Agarwala R."/>
            <person name="Cherry J.L."/>
            <person name="DiCuccio M."/>
            <person name="Hlavina W."/>
            <person name="Kapustin Y."/>
            <person name="Meric P."/>
            <person name="Maglott D."/>
            <person name="Birtle Z."/>
            <person name="Marques A.C."/>
            <person name="Graves T."/>
            <person name="Zhou S."/>
            <person name="Teague B."/>
            <person name="Potamousis K."/>
            <person name="Churas C."/>
            <person name="Place M."/>
            <person name="Herschleb J."/>
            <person name="Runnheim R."/>
            <person name="Forrest D."/>
            <person name="Amos-Landgraf J."/>
            <person name="Schwartz D.C."/>
            <person name="Cheng Z."/>
            <person name="Lindblad-Toh K."/>
            <person name="Eichler E.E."/>
            <person name="Ponting C.P."/>
        </authorList>
    </citation>
    <scope>NUCLEOTIDE SEQUENCE [LARGE SCALE GENOMIC DNA]</scope>
    <source>
        <strain>C57BL/6J</strain>
    </source>
</reference>
<reference key="2">
    <citation type="journal article" date="2005" name="Science">
        <title>The transcriptional landscape of the mammalian genome.</title>
        <authorList>
            <person name="Carninci P."/>
            <person name="Kasukawa T."/>
            <person name="Katayama S."/>
            <person name="Gough J."/>
            <person name="Frith M.C."/>
            <person name="Maeda N."/>
            <person name="Oyama R."/>
            <person name="Ravasi T."/>
            <person name="Lenhard B."/>
            <person name="Wells C."/>
            <person name="Kodzius R."/>
            <person name="Shimokawa K."/>
            <person name="Bajic V.B."/>
            <person name="Brenner S.E."/>
            <person name="Batalov S."/>
            <person name="Forrest A.R."/>
            <person name="Zavolan M."/>
            <person name="Davis M.J."/>
            <person name="Wilming L.G."/>
            <person name="Aidinis V."/>
            <person name="Allen J.E."/>
            <person name="Ambesi-Impiombato A."/>
            <person name="Apweiler R."/>
            <person name="Aturaliya R.N."/>
            <person name="Bailey T.L."/>
            <person name="Bansal M."/>
            <person name="Baxter L."/>
            <person name="Beisel K.W."/>
            <person name="Bersano T."/>
            <person name="Bono H."/>
            <person name="Chalk A.M."/>
            <person name="Chiu K.P."/>
            <person name="Choudhary V."/>
            <person name="Christoffels A."/>
            <person name="Clutterbuck D.R."/>
            <person name="Crowe M.L."/>
            <person name="Dalla E."/>
            <person name="Dalrymple B.P."/>
            <person name="de Bono B."/>
            <person name="Della Gatta G."/>
            <person name="di Bernardo D."/>
            <person name="Down T."/>
            <person name="Engstrom P."/>
            <person name="Fagiolini M."/>
            <person name="Faulkner G."/>
            <person name="Fletcher C.F."/>
            <person name="Fukushima T."/>
            <person name="Furuno M."/>
            <person name="Futaki S."/>
            <person name="Gariboldi M."/>
            <person name="Georgii-Hemming P."/>
            <person name="Gingeras T.R."/>
            <person name="Gojobori T."/>
            <person name="Green R.E."/>
            <person name="Gustincich S."/>
            <person name="Harbers M."/>
            <person name="Hayashi Y."/>
            <person name="Hensch T.K."/>
            <person name="Hirokawa N."/>
            <person name="Hill D."/>
            <person name="Huminiecki L."/>
            <person name="Iacono M."/>
            <person name="Ikeo K."/>
            <person name="Iwama A."/>
            <person name="Ishikawa T."/>
            <person name="Jakt M."/>
            <person name="Kanapin A."/>
            <person name="Katoh M."/>
            <person name="Kawasawa Y."/>
            <person name="Kelso J."/>
            <person name="Kitamura H."/>
            <person name="Kitano H."/>
            <person name="Kollias G."/>
            <person name="Krishnan S.P."/>
            <person name="Kruger A."/>
            <person name="Kummerfeld S.K."/>
            <person name="Kurochkin I.V."/>
            <person name="Lareau L.F."/>
            <person name="Lazarevic D."/>
            <person name="Lipovich L."/>
            <person name="Liu J."/>
            <person name="Liuni S."/>
            <person name="McWilliam S."/>
            <person name="Madan Babu M."/>
            <person name="Madera M."/>
            <person name="Marchionni L."/>
            <person name="Matsuda H."/>
            <person name="Matsuzawa S."/>
            <person name="Miki H."/>
            <person name="Mignone F."/>
            <person name="Miyake S."/>
            <person name="Morris K."/>
            <person name="Mottagui-Tabar S."/>
            <person name="Mulder N."/>
            <person name="Nakano N."/>
            <person name="Nakauchi H."/>
            <person name="Ng P."/>
            <person name="Nilsson R."/>
            <person name="Nishiguchi S."/>
            <person name="Nishikawa S."/>
            <person name="Nori F."/>
            <person name="Ohara O."/>
            <person name="Okazaki Y."/>
            <person name="Orlando V."/>
            <person name="Pang K.C."/>
            <person name="Pavan W.J."/>
            <person name="Pavesi G."/>
            <person name="Pesole G."/>
            <person name="Petrovsky N."/>
            <person name="Piazza S."/>
            <person name="Reed J."/>
            <person name="Reid J.F."/>
            <person name="Ring B.Z."/>
            <person name="Ringwald M."/>
            <person name="Rost B."/>
            <person name="Ruan Y."/>
            <person name="Salzberg S.L."/>
            <person name="Sandelin A."/>
            <person name="Schneider C."/>
            <person name="Schoenbach C."/>
            <person name="Sekiguchi K."/>
            <person name="Semple C.A."/>
            <person name="Seno S."/>
            <person name="Sessa L."/>
            <person name="Sheng Y."/>
            <person name="Shibata Y."/>
            <person name="Shimada H."/>
            <person name="Shimada K."/>
            <person name="Silva D."/>
            <person name="Sinclair B."/>
            <person name="Sperling S."/>
            <person name="Stupka E."/>
            <person name="Sugiura K."/>
            <person name="Sultana R."/>
            <person name="Takenaka Y."/>
            <person name="Taki K."/>
            <person name="Tammoja K."/>
            <person name="Tan S.L."/>
            <person name="Tang S."/>
            <person name="Taylor M.S."/>
            <person name="Tegner J."/>
            <person name="Teichmann S.A."/>
            <person name="Ueda H.R."/>
            <person name="van Nimwegen E."/>
            <person name="Verardo R."/>
            <person name="Wei C.L."/>
            <person name="Yagi K."/>
            <person name="Yamanishi H."/>
            <person name="Zabarovsky E."/>
            <person name="Zhu S."/>
            <person name="Zimmer A."/>
            <person name="Hide W."/>
            <person name="Bult C."/>
            <person name="Grimmond S.M."/>
            <person name="Teasdale R.D."/>
            <person name="Liu E.T."/>
            <person name="Brusic V."/>
            <person name="Quackenbush J."/>
            <person name="Wahlestedt C."/>
            <person name="Mattick J.S."/>
            <person name="Hume D.A."/>
            <person name="Kai C."/>
            <person name="Sasaki D."/>
            <person name="Tomaru Y."/>
            <person name="Fukuda S."/>
            <person name="Kanamori-Katayama M."/>
            <person name="Suzuki M."/>
            <person name="Aoki J."/>
            <person name="Arakawa T."/>
            <person name="Iida J."/>
            <person name="Imamura K."/>
            <person name="Itoh M."/>
            <person name="Kato T."/>
            <person name="Kawaji H."/>
            <person name="Kawagashira N."/>
            <person name="Kawashima T."/>
            <person name="Kojima M."/>
            <person name="Kondo S."/>
            <person name="Konno H."/>
            <person name="Nakano K."/>
            <person name="Ninomiya N."/>
            <person name="Nishio T."/>
            <person name="Okada M."/>
            <person name="Plessy C."/>
            <person name="Shibata K."/>
            <person name="Shiraki T."/>
            <person name="Suzuki S."/>
            <person name="Tagami M."/>
            <person name="Waki K."/>
            <person name="Watahiki A."/>
            <person name="Okamura-Oho Y."/>
            <person name="Suzuki H."/>
            <person name="Kawai J."/>
            <person name="Hayashizaki Y."/>
        </authorList>
    </citation>
    <scope>NUCLEOTIDE SEQUENCE [LARGE SCALE MRNA] OF 76-409</scope>
    <source>
        <strain>C57BL/6J</strain>
        <tissue>Testis</tissue>
    </source>
</reference>
<reference key="3">
    <citation type="journal article" date="2010" name="Cell">
        <title>A tissue-specific atlas of mouse protein phosphorylation and expression.</title>
        <authorList>
            <person name="Huttlin E.L."/>
            <person name="Jedrychowski M.P."/>
            <person name="Elias J.E."/>
            <person name="Goswami T."/>
            <person name="Rad R."/>
            <person name="Beausoleil S.A."/>
            <person name="Villen J."/>
            <person name="Haas W."/>
            <person name="Sowa M.E."/>
            <person name="Gygi S.P."/>
        </authorList>
    </citation>
    <scope>IDENTIFICATION BY MASS SPECTROMETRY [LARGE SCALE ANALYSIS]</scope>
    <source>
        <tissue>Kidney</tissue>
        <tissue>Lung</tissue>
        <tissue>Spleen</tissue>
    </source>
</reference>
<organism>
    <name type="scientific">Mus musculus</name>
    <name type="common">Mouse</name>
    <dbReference type="NCBI Taxonomy" id="10090"/>
    <lineage>
        <taxon>Eukaryota</taxon>
        <taxon>Metazoa</taxon>
        <taxon>Chordata</taxon>
        <taxon>Craniata</taxon>
        <taxon>Vertebrata</taxon>
        <taxon>Euteleostomi</taxon>
        <taxon>Mammalia</taxon>
        <taxon>Eutheria</taxon>
        <taxon>Euarchontoglires</taxon>
        <taxon>Glires</taxon>
        <taxon>Rodentia</taxon>
        <taxon>Myomorpha</taxon>
        <taxon>Muroidea</taxon>
        <taxon>Muridae</taxon>
        <taxon>Murinae</taxon>
        <taxon>Mus</taxon>
        <taxon>Mus</taxon>
    </lineage>
</organism>
<feature type="chain" id="PRO_0000071942" description="Solute carrier family 35 member E1">
    <location>
        <begin position="1"/>
        <end position="409"/>
    </location>
</feature>
<feature type="transmembrane region" description="Helical" evidence="3">
    <location>
        <begin position="50"/>
        <end position="70"/>
    </location>
</feature>
<feature type="transmembrane region" description="Helical" evidence="3">
    <location>
        <begin position="111"/>
        <end position="131"/>
    </location>
</feature>
<feature type="transmembrane region" description="Helical" evidence="3">
    <location>
        <begin position="133"/>
        <end position="153"/>
    </location>
</feature>
<feature type="transmembrane region" description="Helical" evidence="3">
    <location>
        <begin position="165"/>
        <end position="184"/>
    </location>
</feature>
<feature type="transmembrane region" description="Helical" evidence="3">
    <location>
        <begin position="188"/>
        <end position="207"/>
    </location>
</feature>
<feature type="transmembrane region" description="Helical" evidence="3">
    <location>
        <begin position="222"/>
        <end position="242"/>
    </location>
</feature>
<feature type="transmembrane region" description="Helical" evidence="3">
    <location>
        <begin position="252"/>
        <end position="274"/>
    </location>
</feature>
<feature type="transmembrane region" description="Helical" evidence="3">
    <location>
        <begin position="282"/>
        <end position="303"/>
    </location>
</feature>
<feature type="transmembrane region" description="Helical" evidence="3">
    <location>
        <begin position="312"/>
        <end position="332"/>
    </location>
</feature>
<feature type="modified residue" description="Phosphoserine" evidence="2">
    <location>
        <position position="363"/>
    </location>
</feature>
<protein>
    <recommendedName>
        <fullName>Solute carrier family 35 member E1</fullName>
    </recommendedName>
</protein>
<accession>Q8CD26</accession>
<proteinExistence type="evidence at protein level"/>
<keyword id="KW-0472">Membrane</keyword>
<keyword id="KW-0597">Phosphoprotein</keyword>
<keyword id="KW-1185">Reference proteome</keyword>
<keyword id="KW-0812">Transmembrane</keyword>
<keyword id="KW-1133">Transmembrane helix</keyword>
<keyword id="KW-0813">Transport</keyword>
<comment type="function">
    <text evidence="1">Putative transporter.</text>
</comment>
<comment type="subcellular location">
    <subcellularLocation>
        <location evidence="4">Membrane</location>
        <topology evidence="4">Multi-pass membrane protein</topology>
    </subcellularLocation>
</comment>
<comment type="similarity">
    <text evidence="4">Belongs to the TPT transporter family. SLC35E subfamily.</text>
</comment>
<comment type="sequence caution" evidence="4">
    <conflict type="erroneous initiation">
        <sequence resource="EMBL-CDS" id="BAC27470"/>
    </conflict>
</comment>
<evidence type="ECO:0000250" key="1"/>
<evidence type="ECO:0000250" key="2">
    <source>
        <dbReference type="UniProtKB" id="Q96K37"/>
    </source>
</evidence>
<evidence type="ECO:0000255" key="3"/>
<evidence type="ECO:0000305" key="4"/>